<accession>Q7V028</accession>
<evidence type="ECO:0000255" key="1">
    <source>
        <dbReference type="HAMAP-Rule" id="MF_01392"/>
    </source>
</evidence>
<feature type="chain" id="PRO_5000096590" description="Cytochrome c biogenesis protein CcsB">
    <location>
        <begin position="1"/>
        <end position="428"/>
    </location>
</feature>
<feature type="transmembrane region" description="Helical" evidence="1">
    <location>
        <begin position="14"/>
        <end position="34"/>
    </location>
</feature>
<feature type="transmembrane region" description="Helical" evidence="1">
    <location>
        <begin position="72"/>
        <end position="92"/>
    </location>
</feature>
<feature type="transmembrane region" description="Helical" evidence="1">
    <location>
        <begin position="162"/>
        <end position="182"/>
    </location>
</feature>
<gene>
    <name evidence="1" type="primary">ccsB</name>
    <name evidence="1" type="synonym">ccs1</name>
    <name type="ordered locus">PMM1460</name>
</gene>
<sequence>MVIFKKFILKISSLRFAILLIIFIAISSGVGTFIPQGNDQQEYIDFYNETPILGFINGSQVIRLQLDHIYTSNWFLFSLILLCISLAACSFRRQIPSLKAALKWTDYKDEKKFYKLELITNYEIIQDADHILKADSLLRKKGWNISKFENRLSARKGLEGKLGPIIVHIGLIILLIGSAYGNFSSQSKEQYLRLGESLDLINESTNSRVKIKLKNFFIERESDGKPKQFISNLEFFSKQQNLNEIKTTQVNQPIRFKGLTIYQADWSVSNIVMEIDSVLYQLQLKPIPEIGDQIWGLLIELGRENKKNYLLTIDNENGPLKVSNIEDFSENFVYLNNNPIEINSSKLSLKKIIPSSGLIIKNDPSIPFIYLSFTLIIVGTILSLIPTNQIWILFNENTNKLFIGGLSNRNLLGFKKEFLKLSDEIKNN</sequence>
<proteinExistence type="inferred from homology"/>
<dbReference type="EMBL" id="BX548174">
    <property type="protein sequence ID" value="CAE19919.1"/>
    <property type="molecule type" value="Genomic_DNA"/>
</dbReference>
<dbReference type="RefSeq" id="WP_011133088.1">
    <property type="nucleotide sequence ID" value="NC_005072.1"/>
</dbReference>
<dbReference type="STRING" id="59919.PMM1460"/>
<dbReference type="KEGG" id="pmm:PMM1460"/>
<dbReference type="eggNOG" id="COG1333">
    <property type="taxonomic scope" value="Bacteria"/>
</dbReference>
<dbReference type="HOGENOM" id="CLU_034630_0_0_3"/>
<dbReference type="OrthoDB" id="9770923at2"/>
<dbReference type="Proteomes" id="UP000001026">
    <property type="component" value="Chromosome"/>
</dbReference>
<dbReference type="GO" id="GO:0031676">
    <property type="term" value="C:plasma membrane-derived thylakoid membrane"/>
    <property type="evidence" value="ECO:0007669"/>
    <property type="project" value="UniProtKB-SubCell"/>
</dbReference>
<dbReference type="GO" id="GO:0017004">
    <property type="term" value="P:cytochrome complex assembly"/>
    <property type="evidence" value="ECO:0007669"/>
    <property type="project" value="UniProtKB-UniRule"/>
</dbReference>
<dbReference type="HAMAP" id="MF_01392">
    <property type="entry name" value="CytC_Ccs1"/>
    <property type="match status" value="1"/>
</dbReference>
<dbReference type="InterPro" id="IPR023494">
    <property type="entry name" value="Cyt_c_bgen_Ccs1/CcsB/ResB"/>
</dbReference>
<dbReference type="InterPro" id="IPR007816">
    <property type="entry name" value="ResB-like_domain"/>
</dbReference>
<dbReference type="PANTHER" id="PTHR31566">
    <property type="entry name" value="CYTOCHROME C BIOGENESIS PROTEIN CCS1, CHLOROPLASTIC"/>
    <property type="match status" value="1"/>
</dbReference>
<dbReference type="PANTHER" id="PTHR31566:SF0">
    <property type="entry name" value="CYTOCHROME C BIOGENESIS PROTEIN CCS1, CHLOROPLASTIC"/>
    <property type="match status" value="1"/>
</dbReference>
<dbReference type="Pfam" id="PF05140">
    <property type="entry name" value="ResB"/>
    <property type="match status" value="2"/>
</dbReference>
<keyword id="KW-0201">Cytochrome c-type biogenesis</keyword>
<keyword id="KW-0472">Membrane</keyword>
<keyword id="KW-0793">Thylakoid</keyword>
<keyword id="KW-0812">Transmembrane</keyword>
<keyword id="KW-1133">Transmembrane helix</keyword>
<reference key="1">
    <citation type="journal article" date="2003" name="Nature">
        <title>Genome divergence in two Prochlorococcus ecotypes reflects oceanic niche differentiation.</title>
        <authorList>
            <person name="Rocap G."/>
            <person name="Larimer F.W."/>
            <person name="Lamerdin J.E."/>
            <person name="Malfatti S."/>
            <person name="Chain P."/>
            <person name="Ahlgren N.A."/>
            <person name="Arellano A."/>
            <person name="Coleman M."/>
            <person name="Hauser L."/>
            <person name="Hess W.R."/>
            <person name="Johnson Z.I."/>
            <person name="Land M.L."/>
            <person name="Lindell D."/>
            <person name="Post A.F."/>
            <person name="Regala W."/>
            <person name="Shah M."/>
            <person name="Shaw S.L."/>
            <person name="Steglich C."/>
            <person name="Sullivan M.B."/>
            <person name="Ting C.S."/>
            <person name="Tolonen A."/>
            <person name="Webb E.A."/>
            <person name="Zinser E.R."/>
            <person name="Chisholm S.W."/>
        </authorList>
    </citation>
    <scope>NUCLEOTIDE SEQUENCE [LARGE SCALE GENOMIC DNA]</scope>
    <source>
        <strain>CCMP1986 / NIES-2087 / MED4</strain>
    </source>
</reference>
<comment type="function">
    <text evidence="1">Required during biogenesis of c-type cytochromes (cytochrome c6 and cytochrome f) at the step of heme attachment.</text>
</comment>
<comment type="subunit">
    <text evidence="1">May interact with CcsA.</text>
</comment>
<comment type="subcellular location">
    <subcellularLocation>
        <location evidence="1">Cellular thylakoid membrane</location>
        <topology evidence="1">Multi-pass membrane protein</topology>
    </subcellularLocation>
</comment>
<comment type="similarity">
    <text evidence="1">Belongs to the Ccs1/CcsB family.</text>
</comment>
<organism>
    <name type="scientific">Prochlorococcus marinus subsp. pastoris (strain CCMP1986 / NIES-2087 / MED4)</name>
    <dbReference type="NCBI Taxonomy" id="59919"/>
    <lineage>
        <taxon>Bacteria</taxon>
        <taxon>Bacillati</taxon>
        <taxon>Cyanobacteriota</taxon>
        <taxon>Cyanophyceae</taxon>
        <taxon>Synechococcales</taxon>
        <taxon>Prochlorococcaceae</taxon>
        <taxon>Prochlorococcus</taxon>
    </lineage>
</organism>
<name>CCS1_PROMP</name>
<protein>
    <recommendedName>
        <fullName evidence="1">Cytochrome c biogenesis protein CcsB</fullName>
    </recommendedName>
</protein>